<feature type="chain" id="PRO_1000015076" description="Small ribosomal subunit protein uS10">
    <location>
        <begin position="1"/>
        <end position="102"/>
    </location>
</feature>
<comment type="function">
    <text evidence="1">Involved in the binding of tRNA to the ribosomes.</text>
</comment>
<comment type="subunit">
    <text evidence="1">Part of the 30S ribosomal subunit.</text>
</comment>
<comment type="similarity">
    <text evidence="1">Belongs to the universal ribosomal protein uS10 family.</text>
</comment>
<protein>
    <recommendedName>
        <fullName evidence="1">Small ribosomal subunit protein uS10</fullName>
    </recommendedName>
    <alternativeName>
        <fullName evidence="2">30S ribosomal protein S10</fullName>
    </alternativeName>
</protein>
<organism>
    <name type="scientific">Pelobacter propionicus (strain DSM 2379 / NBRC 103807 / OttBd1)</name>
    <dbReference type="NCBI Taxonomy" id="338966"/>
    <lineage>
        <taxon>Bacteria</taxon>
        <taxon>Pseudomonadati</taxon>
        <taxon>Thermodesulfobacteriota</taxon>
        <taxon>Desulfuromonadia</taxon>
        <taxon>Desulfuromonadales</taxon>
        <taxon>Desulfuromonadaceae</taxon>
        <taxon>Pelobacter</taxon>
    </lineage>
</organism>
<proteinExistence type="inferred from homology"/>
<gene>
    <name evidence="1" type="primary">rpsJ</name>
    <name type="ordered locus">Ppro_0679</name>
</gene>
<evidence type="ECO:0000255" key="1">
    <source>
        <dbReference type="HAMAP-Rule" id="MF_00508"/>
    </source>
</evidence>
<evidence type="ECO:0000305" key="2"/>
<dbReference type="EMBL" id="CP000482">
    <property type="protein sequence ID" value="ABK98310.1"/>
    <property type="molecule type" value="Genomic_DNA"/>
</dbReference>
<dbReference type="RefSeq" id="WP_011734622.1">
    <property type="nucleotide sequence ID" value="NC_008609.1"/>
</dbReference>
<dbReference type="SMR" id="A1ALU0"/>
<dbReference type="STRING" id="338966.Ppro_0679"/>
<dbReference type="KEGG" id="ppd:Ppro_0679"/>
<dbReference type="eggNOG" id="COG0051">
    <property type="taxonomic scope" value="Bacteria"/>
</dbReference>
<dbReference type="HOGENOM" id="CLU_122625_1_3_7"/>
<dbReference type="OrthoDB" id="9804464at2"/>
<dbReference type="Proteomes" id="UP000006732">
    <property type="component" value="Chromosome"/>
</dbReference>
<dbReference type="GO" id="GO:1990904">
    <property type="term" value="C:ribonucleoprotein complex"/>
    <property type="evidence" value="ECO:0007669"/>
    <property type="project" value="UniProtKB-KW"/>
</dbReference>
<dbReference type="GO" id="GO:0005840">
    <property type="term" value="C:ribosome"/>
    <property type="evidence" value="ECO:0007669"/>
    <property type="project" value="UniProtKB-KW"/>
</dbReference>
<dbReference type="GO" id="GO:0003735">
    <property type="term" value="F:structural constituent of ribosome"/>
    <property type="evidence" value="ECO:0007669"/>
    <property type="project" value="InterPro"/>
</dbReference>
<dbReference type="GO" id="GO:0000049">
    <property type="term" value="F:tRNA binding"/>
    <property type="evidence" value="ECO:0007669"/>
    <property type="project" value="UniProtKB-UniRule"/>
</dbReference>
<dbReference type="GO" id="GO:0006412">
    <property type="term" value="P:translation"/>
    <property type="evidence" value="ECO:0007669"/>
    <property type="project" value="UniProtKB-UniRule"/>
</dbReference>
<dbReference type="FunFam" id="3.30.70.600:FF:000001">
    <property type="entry name" value="30S ribosomal protein S10"/>
    <property type="match status" value="1"/>
</dbReference>
<dbReference type="Gene3D" id="3.30.70.600">
    <property type="entry name" value="Ribosomal protein S10 domain"/>
    <property type="match status" value="1"/>
</dbReference>
<dbReference type="HAMAP" id="MF_00508">
    <property type="entry name" value="Ribosomal_uS10"/>
    <property type="match status" value="1"/>
</dbReference>
<dbReference type="InterPro" id="IPR001848">
    <property type="entry name" value="Ribosomal_uS10"/>
</dbReference>
<dbReference type="InterPro" id="IPR018268">
    <property type="entry name" value="Ribosomal_uS10_CS"/>
</dbReference>
<dbReference type="InterPro" id="IPR027486">
    <property type="entry name" value="Ribosomal_uS10_dom"/>
</dbReference>
<dbReference type="InterPro" id="IPR036838">
    <property type="entry name" value="Ribosomal_uS10_dom_sf"/>
</dbReference>
<dbReference type="NCBIfam" id="NF001861">
    <property type="entry name" value="PRK00596.1"/>
    <property type="match status" value="1"/>
</dbReference>
<dbReference type="NCBIfam" id="TIGR01049">
    <property type="entry name" value="rpsJ_bact"/>
    <property type="match status" value="1"/>
</dbReference>
<dbReference type="PANTHER" id="PTHR11700">
    <property type="entry name" value="30S RIBOSOMAL PROTEIN S10 FAMILY MEMBER"/>
    <property type="match status" value="1"/>
</dbReference>
<dbReference type="Pfam" id="PF00338">
    <property type="entry name" value="Ribosomal_S10"/>
    <property type="match status" value="1"/>
</dbReference>
<dbReference type="PRINTS" id="PR00971">
    <property type="entry name" value="RIBOSOMALS10"/>
</dbReference>
<dbReference type="SMART" id="SM01403">
    <property type="entry name" value="Ribosomal_S10"/>
    <property type="match status" value="1"/>
</dbReference>
<dbReference type="SUPFAM" id="SSF54999">
    <property type="entry name" value="Ribosomal protein S10"/>
    <property type="match status" value="1"/>
</dbReference>
<dbReference type="PROSITE" id="PS00361">
    <property type="entry name" value="RIBOSOMAL_S10"/>
    <property type="match status" value="1"/>
</dbReference>
<keyword id="KW-1185">Reference proteome</keyword>
<keyword id="KW-0687">Ribonucleoprotein</keyword>
<keyword id="KW-0689">Ribosomal protein</keyword>
<reference key="1">
    <citation type="submission" date="2006-10" db="EMBL/GenBank/DDBJ databases">
        <title>Complete sequence of chromosome of Pelobacter propionicus DSM 2379.</title>
        <authorList>
            <consortium name="US DOE Joint Genome Institute"/>
            <person name="Copeland A."/>
            <person name="Lucas S."/>
            <person name="Lapidus A."/>
            <person name="Barry K."/>
            <person name="Detter J.C."/>
            <person name="Glavina del Rio T."/>
            <person name="Hammon N."/>
            <person name="Israni S."/>
            <person name="Dalin E."/>
            <person name="Tice H."/>
            <person name="Pitluck S."/>
            <person name="Saunders E."/>
            <person name="Brettin T."/>
            <person name="Bruce D."/>
            <person name="Han C."/>
            <person name="Tapia R."/>
            <person name="Schmutz J."/>
            <person name="Larimer F."/>
            <person name="Land M."/>
            <person name="Hauser L."/>
            <person name="Kyrpides N."/>
            <person name="Kim E."/>
            <person name="Lovley D."/>
            <person name="Richardson P."/>
        </authorList>
    </citation>
    <scope>NUCLEOTIDE SEQUENCE [LARGE SCALE GENOMIC DNA]</scope>
    <source>
        <strain>DSM 2379 / NBRC 103807 / OttBd1</strain>
    </source>
</reference>
<accession>A1ALU0</accession>
<name>RS10_PELPD</name>
<sequence length="102" mass="11528">MQSQKIRIRLKAYDHKLLDVSVTEIVDTAKRTGARVAGPIPLPTVINKYCVLRGPHVDKKSRDQFEIRTHKRLIDILDPTQQTVDALMKLDLAAGVDVEIKL</sequence>